<comment type="function">
    <text evidence="1">Participates actively in the response to hyperosmotic and heat shock by preventing the aggregation of stress-denatured proteins, in association with DnaK and GrpE. It is the nucleotide exchange factor for DnaK and may function as a thermosensor. Unfolded proteins bind initially to DnaJ; upon interaction with the DnaJ-bound protein, DnaK hydrolyzes its bound ATP, resulting in the formation of a stable complex. GrpE releases ADP from DnaK; ATP binding to DnaK triggers the release of the substrate protein, thus completing the reaction cycle. Several rounds of ATP-dependent interactions between DnaJ, DnaK and GrpE are required for fully efficient folding.</text>
</comment>
<comment type="subunit">
    <text evidence="1">Homodimer.</text>
</comment>
<comment type="subcellular location">
    <subcellularLocation>
        <location evidence="1">Cytoplasm</location>
    </subcellularLocation>
</comment>
<comment type="similarity">
    <text evidence="1">Belongs to the GrpE family.</text>
</comment>
<proteinExistence type="inferred from homology"/>
<reference key="1">
    <citation type="journal article" date="1998" name="Nature">
        <title>The genome sequence of Rickettsia prowazekii and the origin of mitochondria.</title>
        <authorList>
            <person name="Andersson S.G.E."/>
            <person name="Zomorodipour A."/>
            <person name="Andersson J.O."/>
            <person name="Sicheritz-Ponten T."/>
            <person name="Alsmark U.C.M."/>
            <person name="Podowski R.M."/>
            <person name="Naeslund A.K."/>
            <person name="Eriksson A.-S."/>
            <person name="Winkler H.H."/>
            <person name="Kurland C.G."/>
        </authorList>
    </citation>
    <scope>NUCLEOTIDE SEQUENCE [LARGE SCALE GENOMIC DNA]</scope>
    <source>
        <strain>Madrid E</strain>
    </source>
</reference>
<gene>
    <name evidence="1" type="primary">grpE</name>
    <name type="ordered locus">RP629</name>
</gene>
<accession>Q9ZCT4</accession>
<evidence type="ECO:0000255" key="1">
    <source>
        <dbReference type="HAMAP-Rule" id="MF_01151"/>
    </source>
</evidence>
<name>GRPE_RICPR</name>
<keyword id="KW-0143">Chaperone</keyword>
<keyword id="KW-0963">Cytoplasm</keyword>
<keyword id="KW-1185">Reference proteome</keyword>
<keyword id="KW-0346">Stress response</keyword>
<sequence>MKDYNIENNNVEEENPNVETQVVDNEEIVRLKAEIEELKDKLIRTTAEIDNTRKRLEKARDEAKDYAIATFAKELLNVSDNLARALAHKPANSDVEVTNIISGVQMTKDELDKIFHKHHIEEIKPAIGSMFDYNLHNAISHIEHPDHEPNSIITLMQSGYKIRDRLLRPAAVQVVKKP</sequence>
<feature type="chain" id="PRO_0000113849" description="Protein GrpE">
    <location>
        <begin position="1"/>
        <end position="178"/>
    </location>
</feature>
<dbReference type="EMBL" id="AJ235272">
    <property type="protein sequence ID" value="CAA15070.1"/>
    <property type="molecule type" value="Genomic_DNA"/>
</dbReference>
<dbReference type="PIR" id="D71668">
    <property type="entry name" value="D71668"/>
</dbReference>
<dbReference type="RefSeq" id="NP_220994.1">
    <property type="nucleotide sequence ID" value="NC_000963.1"/>
</dbReference>
<dbReference type="RefSeq" id="WP_004596256.1">
    <property type="nucleotide sequence ID" value="NC_000963.1"/>
</dbReference>
<dbReference type="SMR" id="Q9ZCT4"/>
<dbReference type="STRING" id="272947.gene:17555706"/>
<dbReference type="EnsemblBacteria" id="CAA15070">
    <property type="protein sequence ID" value="CAA15070"/>
    <property type="gene ID" value="CAA15070"/>
</dbReference>
<dbReference type="GeneID" id="57569754"/>
<dbReference type="KEGG" id="rpr:RP629"/>
<dbReference type="PATRIC" id="fig|272947.5.peg.651"/>
<dbReference type="eggNOG" id="COG0576">
    <property type="taxonomic scope" value="Bacteria"/>
</dbReference>
<dbReference type="HOGENOM" id="CLU_057217_6_3_5"/>
<dbReference type="OrthoDB" id="9789811at2"/>
<dbReference type="Proteomes" id="UP000002480">
    <property type="component" value="Chromosome"/>
</dbReference>
<dbReference type="GO" id="GO:0005737">
    <property type="term" value="C:cytoplasm"/>
    <property type="evidence" value="ECO:0007669"/>
    <property type="project" value="UniProtKB-SubCell"/>
</dbReference>
<dbReference type="GO" id="GO:0000774">
    <property type="term" value="F:adenyl-nucleotide exchange factor activity"/>
    <property type="evidence" value="ECO:0007669"/>
    <property type="project" value="InterPro"/>
</dbReference>
<dbReference type="GO" id="GO:0042803">
    <property type="term" value="F:protein homodimerization activity"/>
    <property type="evidence" value="ECO:0007669"/>
    <property type="project" value="InterPro"/>
</dbReference>
<dbReference type="GO" id="GO:0051087">
    <property type="term" value="F:protein-folding chaperone binding"/>
    <property type="evidence" value="ECO:0007669"/>
    <property type="project" value="InterPro"/>
</dbReference>
<dbReference type="GO" id="GO:0051082">
    <property type="term" value="F:unfolded protein binding"/>
    <property type="evidence" value="ECO:0007669"/>
    <property type="project" value="TreeGrafter"/>
</dbReference>
<dbReference type="GO" id="GO:0006457">
    <property type="term" value="P:protein folding"/>
    <property type="evidence" value="ECO:0007669"/>
    <property type="project" value="InterPro"/>
</dbReference>
<dbReference type="GO" id="GO:0030150">
    <property type="term" value="P:protein import into mitochondrial matrix"/>
    <property type="evidence" value="ECO:0007669"/>
    <property type="project" value="TreeGrafter"/>
</dbReference>
<dbReference type="CDD" id="cd00446">
    <property type="entry name" value="GrpE"/>
    <property type="match status" value="1"/>
</dbReference>
<dbReference type="FunFam" id="2.30.22.10:FF:000001">
    <property type="entry name" value="Protein GrpE"/>
    <property type="match status" value="1"/>
</dbReference>
<dbReference type="Gene3D" id="3.90.20.20">
    <property type="match status" value="1"/>
</dbReference>
<dbReference type="Gene3D" id="2.30.22.10">
    <property type="entry name" value="Head domain of nucleotide exchange factor GrpE"/>
    <property type="match status" value="1"/>
</dbReference>
<dbReference type="HAMAP" id="MF_01151">
    <property type="entry name" value="GrpE"/>
    <property type="match status" value="1"/>
</dbReference>
<dbReference type="InterPro" id="IPR000740">
    <property type="entry name" value="GrpE"/>
</dbReference>
<dbReference type="InterPro" id="IPR013805">
    <property type="entry name" value="GrpE_coiled_coil"/>
</dbReference>
<dbReference type="InterPro" id="IPR009012">
    <property type="entry name" value="GrpE_head"/>
</dbReference>
<dbReference type="NCBIfam" id="NF010758">
    <property type="entry name" value="PRK14161.1"/>
    <property type="match status" value="1"/>
</dbReference>
<dbReference type="PANTHER" id="PTHR21237">
    <property type="entry name" value="GRPE PROTEIN"/>
    <property type="match status" value="1"/>
</dbReference>
<dbReference type="PANTHER" id="PTHR21237:SF23">
    <property type="entry name" value="GRPE PROTEIN HOMOLOG, MITOCHONDRIAL"/>
    <property type="match status" value="1"/>
</dbReference>
<dbReference type="Pfam" id="PF01025">
    <property type="entry name" value="GrpE"/>
    <property type="match status" value="1"/>
</dbReference>
<dbReference type="PRINTS" id="PR00773">
    <property type="entry name" value="GRPEPROTEIN"/>
</dbReference>
<dbReference type="SUPFAM" id="SSF58014">
    <property type="entry name" value="Coiled-coil domain of nucleotide exchange factor GrpE"/>
    <property type="match status" value="1"/>
</dbReference>
<dbReference type="SUPFAM" id="SSF51064">
    <property type="entry name" value="Head domain of nucleotide exchange factor GrpE"/>
    <property type="match status" value="1"/>
</dbReference>
<dbReference type="PROSITE" id="PS01071">
    <property type="entry name" value="GRPE"/>
    <property type="match status" value="1"/>
</dbReference>
<protein>
    <recommendedName>
        <fullName evidence="1">Protein GrpE</fullName>
    </recommendedName>
    <alternativeName>
        <fullName evidence="1">HSP-70 cofactor</fullName>
    </alternativeName>
</protein>
<organism>
    <name type="scientific">Rickettsia prowazekii (strain Madrid E)</name>
    <dbReference type="NCBI Taxonomy" id="272947"/>
    <lineage>
        <taxon>Bacteria</taxon>
        <taxon>Pseudomonadati</taxon>
        <taxon>Pseudomonadota</taxon>
        <taxon>Alphaproteobacteria</taxon>
        <taxon>Rickettsiales</taxon>
        <taxon>Rickettsiaceae</taxon>
        <taxon>Rickettsieae</taxon>
        <taxon>Rickettsia</taxon>
        <taxon>typhus group</taxon>
    </lineage>
</organism>